<feature type="chain" id="PRO_0000287648" description="tRNA-specific adenosine deaminase 1">
    <location>
        <begin position="1"/>
        <end position="499"/>
    </location>
</feature>
<feature type="domain" description="A to I editase" evidence="2">
    <location>
        <begin position="63"/>
        <end position="498"/>
    </location>
</feature>
<feature type="region of interest" description="Disordered" evidence="3">
    <location>
        <begin position="170"/>
        <end position="194"/>
    </location>
</feature>
<feature type="region of interest" description="Disordered" evidence="3">
    <location>
        <begin position="212"/>
        <end position="237"/>
    </location>
</feature>
<feature type="compositionally biased region" description="Basic and acidic residues" evidence="3">
    <location>
        <begin position="178"/>
        <end position="187"/>
    </location>
</feature>
<feature type="active site" description="Proton donor" evidence="2">
    <location>
        <position position="89"/>
    </location>
</feature>
<feature type="binding site" evidence="2">
    <location>
        <position position="87"/>
    </location>
    <ligand>
        <name>Zn(2+)</name>
        <dbReference type="ChEBI" id="CHEBI:29105"/>
    </ligand>
</feature>
<feature type="binding site" evidence="1">
    <location>
        <position position="93"/>
    </location>
    <ligand>
        <name>1D-myo-inositol hexakisphosphate</name>
        <dbReference type="ChEBI" id="CHEBI:58130"/>
    </ligand>
</feature>
<feature type="binding site" evidence="1">
    <location>
        <position position="94"/>
    </location>
    <ligand>
        <name>1D-myo-inositol hexakisphosphate</name>
        <dbReference type="ChEBI" id="CHEBI:58130"/>
    </ligand>
</feature>
<feature type="binding site" evidence="2">
    <location>
        <position position="142"/>
    </location>
    <ligand>
        <name>Zn(2+)</name>
        <dbReference type="ChEBI" id="CHEBI:29105"/>
    </ligand>
</feature>
<feature type="binding site" evidence="2">
    <location>
        <position position="294"/>
    </location>
    <ligand>
        <name>Zn(2+)</name>
        <dbReference type="ChEBI" id="CHEBI:29105"/>
    </ligand>
</feature>
<feature type="binding site" evidence="1">
    <location>
        <position position="297"/>
    </location>
    <ligand>
        <name>1D-myo-inositol hexakisphosphate</name>
        <dbReference type="ChEBI" id="CHEBI:58130"/>
    </ligand>
</feature>
<feature type="binding site" evidence="1">
    <location>
        <position position="300"/>
    </location>
    <ligand>
        <name>1D-myo-inositol hexakisphosphate</name>
        <dbReference type="ChEBI" id="CHEBI:58130"/>
    </ligand>
</feature>
<feature type="binding site" evidence="1">
    <location>
        <position position="430"/>
    </location>
    <ligand>
        <name>1D-myo-inositol hexakisphosphate</name>
        <dbReference type="ChEBI" id="CHEBI:58130"/>
    </ligand>
</feature>
<feature type="binding site" evidence="1">
    <location>
        <position position="466"/>
    </location>
    <ligand>
        <name>1D-myo-inositol hexakisphosphate</name>
        <dbReference type="ChEBI" id="CHEBI:58130"/>
    </ligand>
</feature>
<feature type="modified residue" description="Phosphoserine" evidence="8 9">
    <location>
        <position position="191"/>
    </location>
</feature>
<feature type="splice variant" id="VSP_025580" description="In isoform 3." evidence="7">
    <location>
        <begin position="343"/>
        <end position="424"/>
    </location>
</feature>
<feature type="splice variant" id="VSP_025581" description="In isoform 2 and isoform 3." evidence="5 6">
    <location>
        <begin position="455"/>
        <end position="499"/>
    </location>
</feature>
<feature type="sequence conflict" description="In Ref. 2; BAE36167." evidence="7" ref="2">
    <original>T</original>
    <variation>A</variation>
    <location>
        <position position="201"/>
    </location>
</feature>
<gene>
    <name type="primary">Adat1</name>
</gene>
<accession>Q9JHI2</accession>
<accession>Q3TU04</accession>
<accession>Q8CBP0</accession>
<accession>Q8VE23</accession>
<reference key="1">
    <citation type="journal article" date="2000" name="Gene">
        <title>Sequence, genomic organization and functional expression of the murine tRNA-specific adenosine deaminase ADAT1.</title>
        <authorList>
            <person name="Maas S."/>
            <person name="Kim Y.-G."/>
            <person name="Rich A."/>
        </authorList>
    </citation>
    <scope>NUCLEOTIDE SEQUENCE [GENOMIC DNA / MRNA] (ISOFORM 1)</scope>
    <scope>FUNCTION</scope>
    <scope>ENZYME ACTIVITY</scope>
    <source>
        <strain>129/Sv</strain>
    </source>
</reference>
<reference key="2">
    <citation type="journal article" date="2005" name="Science">
        <title>The transcriptional landscape of the mammalian genome.</title>
        <authorList>
            <person name="Carninci P."/>
            <person name="Kasukawa T."/>
            <person name="Katayama S."/>
            <person name="Gough J."/>
            <person name="Frith M.C."/>
            <person name="Maeda N."/>
            <person name="Oyama R."/>
            <person name="Ravasi T."/>
            <person name="Lenhard B."/>
            <person name="Wells C."/>
            <person name="Kodzius R."/>
            <person name="Shimokawa K."/>
            <person name="Bajic V.B."/>
            <person name="Brenner S.E."/>
            <person name="Batalov S."/>
            <person name="Forrest A.R."/>
            <person name="Zavolan M."/>
            <person name="Davis M.J."/>
            <person name="Wilming L.G."/>
            <person name="Aidinis V."/>
            <person name="Allen J.E."/>
            <person name="Ambesi-Impiombato A."/>
            <person name="Apweiler R."/>
            <person name="Aturaliya R.N."/>
            <person name="Bailey T.L."/>
            <person name="Bansal M."/>
            <person name="Baxter L."/>
            <person name="Beisel K.W."/>
            <person name="Bersano T."/>
            <person name="Bono H."/>
            <person name="Chalk A.M."/>
            <person name="Chiu K.P."/>
            <person name="Choudhary V."/>
            <person name="Christoffels A."/>
            <person name="Clutterbuck D.R."/>
            <person name="Crowe M.L."/>
            <person name="Dalla E."/>
            <person name="Dalrymple B.P."/>
            <person name="de Bono B."/>
            <person name="Della Gatta G."/>
            <person name="di Bernardo D."/>
            <person name="Down T."/>
            <person name="Engstrom P."/>
            <person name="Fagiolini M."/>
            <person name="Faulkner G."/>
            <person name="Fletcher C.F."/>
            <person name="Fukushima T."/>
            <person name="Furuno M."/>
            <person name="Futaki S."/>
            <person name="Gariboldi M."/>
            <person name="Georgii-Hemming P."/>
            <person name="Gingeras T.R."/>
            <person name="Gojobori T."/>
            <person name="Green R.E."/>
            <person name="Gustincich S."/>
            <person name="Harbers M."/>
            <person name="Hayashi Y."/>
            <person name="Hensch T.K."/>
            <person name="Hirokawa N."/>
            <person name="Hill D."/>
            <person name="Huminiecki L."/>
            <person name="Iacono M."/>
            <person name="Ikeo K."/>
            <person name="Iwama A."/>
            <person name="Ishikawa T."/>
            <person name="Jakt M."/>
            <person name="Kanapin A."/>
            <person name="Katoh M."/>
            <person name="Kawasawa Y."/>
            <person name="Kelso J."/>
            <person name="Kitamura H."/>
            <person name="Kitano H."/>
            <person name="Kollias G."/>
            <person name="Krishnan S.P."/>
            <person name="Kruger A."/>
            <person name="Kummerfeld S.K."/>
            <person name="Kurochkin I.V."/>
            <person name="Lareau L.F."/>
            <person name="Lazarevic D."/>
            <person name="Lipovich L."/>
            <person name="Liu J."/>
            <person name="Liuni S."/>
            <person name="McWilliam S."/>
            <person name="Madan Babu M."/>
            <person name="Madera M."/>
            <person name="Marchionni L."/>
            <person name="Matsuda H."/>
            <person name="Matsuzawa S."/>
            <person name="Miki H."/>
            <person name="Mignone F."/>
            <person name="Miyake S."/>
            <person name="Morris K."/>
            <person name="Mottagui-Tabar S."/>
            <person name="Mulder N."/>
            <person name="Nakano N."/>
            <person name="Nakauchi H."/>
            <person name="Ng P."/>
            <person name="Nilsson R."/>
            <person name="Nishiguchi S."/>
            <person name="Nishikawa S."/>
            <person name="Nori F."/>
            <person name="Ohara O."/>
            <person name="Okazaki Y."/>
            <person name="Orlando V."/>
            <person name="Pang K.C."/>
            <person name="Pavan W.J."/>
            <person name="Pavesi G."/>
            <person name="Pesole G."/>
            <person name="Petrovsky N."/>
            <person name="Piazza S."/>
            <person name="Reed J."/>
            <person name="Reid J.F."/>
            <person name="Ring B.Z."/>
            <person name="Ringwald M."/>
            <person name="Rost B."/>
            <person name="Ruan Y."/>
            <person name="Salzberg S.L."/>
            <person name="Sandelin A."/>
            <person name="Schneider C."/>
            <person name="Schoenbach C."/>
            <person name="Sekiguchi K."/>
            <person name="Semple C.A."/>
            <person name="Seno S."/>
            <person name="Sessa L."/>
            <person name="Sheng Y."/>
            <person name="Shibata Y."/>
            <person name="Shimada H."/>
            <person name="Shimada K."/>
            <person name="Silva D."/>
            <person name="Sinclair B."/>
            <person name="Sperling S."/>
            <person name="Stupka E."/>
            <person name="Sugiura K."/>
            <person name="Sultana R."/>
            <person name="Takenaka Y."/>
            <person name="Taki K."/>
            <person name="Tammoja K."/>
            <person name="Tan S.L."/>
            <person name="Tang S."/>
            <person name="Taylor M.S."/>
            <person name="Tegner J."/>
            <person name="Teichmann S.A."/>
            <person name="Ueda H.R."/>
            <person name="van Nimwegen E."/>
            <person name="Verardo R."/>
            <person name="Wei C.L."/>
            <person name="Yagi K."/>
            <person name="Yamanishi H."/>
            <person name="Zabarovsky E."/>
            <person name="Zhu S."/>
            <person name="Zimmer A."/>
            <person name="Hide W."/>
            <person name="Bult C."/>
            <person name="Grimmond S.M."/>
            <person name="Teasdale R.D."/>
            <person name="Liu E.T."/>
            <person name="Brusic V."/>
            <person name="Quackenbush J."/>
            <person name="Wahlestedt C."/>
            <person name="Mattick J.S."/>
            <person name="Hume D.A."/>
            <person name="Kai C."/>
            <person name="Sasaki D."/>
            <person name="Tomaru Y."/>
            <person name="Fukuda S."/>
            <person name="Kanamori-Katayama M."/>
            <person name="Suzuki M."/>
            <person name="Aoki J."/>
            <person name="Arakawa T."/>
            <person name="Iida J."/>
            <person name="Imamura K."/>
            <person name="Itoh M."/>
            <person name="Kato T."/>
            <person name="Kawaji H."/>
            <person name="Kawagashira N."/>
            <person name="Kawashima T."/>
            <person name="Kojima M."/>
            <person name="Kondo S."/>
            <person name="Konno H."/>
            <person name="Nakano K."/>
            <person name="Ninomiya N."/>
            <person name="Nishio T."/>
            <person name="Okada M."/>
            <person name="Plessy C."/>
            <person name="Shibata K."/>
            <person name="Shiraki T."/>
            <person name="Suzuki S."/>
            <person name="Tagami M."/>
            <person name="Waki K."/>
            <person name="Watahiki A."/>
            <person name="Okamura-Oho Y."/>
            <person name="Suzuki H."/>
            <person name="Kawai J."/>
            <person name="Hayashizaki Y."/>
        </authorList>
    </citation>
    <scope>NUCLEOTIDE SEQUENCE [LARGE SCALE MRNA] (ISOFORMS 1 AND 2)</scope>
    <source>
        <strain>C57BL/6J</strain>
        <tissue>Cerebellum</tissue>
        <tissue>Skin</tissue>
        <tissue>Spinal cord</tissue>
        <tissue>Urinary bladder</tissue>
    </source>
</reference>
<reference key="3">
    <citation type="journal article" date="2004" name="Genome Res.">
        <title>The status, quality, and expansion of the NIH full-length cDNA project: the Mammalian Gene Collection (MGC).</title>
        <authorList>
            <consortium name="The MGC Project Team"/>
        </authorList>
    </citation>
    <scope>NUCLEOTIDE SEQUENCE [LARGE SCALE MRNA] (ISOFORM 2)</scope>
    <source>
        <strain>FVB/N</strain>
        <tissue>Mammary tumor</tissue>
    </source>
</reference>
<reference key="4">
    <citation type="journal article" date="2007" name="Proc. Natl. Acad. Sci. U.S.A.">
        <title>Large-scale phosphorylation analysis of mouse liver.</title>
        <authorList>
            <person name="Villen J."/>
            <person name="Beausoleil S.A."/>
            <person name="Gerber S.A."/>
            <person name="Gygi S.P."/>
        </authorList>
    </citation>
    <scope>PHOSPHORYLATION [LARGE SCALE ANALYSIS] AT SER-191</scope>
    <scope>IDENTIFICATION BY MASS SPECTROMETRY [LARGE SCALE ANALYSIS]</scope>
    <source>
        <tissue>Liver</tissue>
    </source>
</reference>
<reference key="5">
    <citation type="journal article" date="2010" name="Cell">
        <title>A tissue-specific atlas of mouse protein phosphorylation and expression.</title>
        <authorList>
            <person name="Huttlin E.L."/>
            <person name="Jedrychowski M.P."/>
            <person name="Elias J.E."/>
            <person name="Goswami T."/>
            <person name="Rad R."/>
            <person name="Beausoleil S.A."/>
            <person name="Villen J."/>
            <person name="Haas W."/>
            <person name="Sowa M.E."/>
            <person name="Gygi S.P."/>
        </authorList>
    </citation>
    <scope>PHOSPHORYLATION [LARGE SCALE ANALYSIS] AT SER-191</scope>
    <scope>IDENTIFICATION BY MASS SPECTROMETRY [LARGE SCALE ANALYSIS]</scope>
    <source>
        <tissue>Liver</tissue>
        <tissue>Pancreas</tissue>
    </source>
</reference>
<sequence>MWTADEIAQLCYAHYNVRLPKQGKPEPNREWTLLAAVVKIQASANQACDIPEKEVQVTKEVVSMGTGTKCIGQSKMRESGDILNDSHAEIIARRSFQRYLLHQLHLAAVLKEDSIFVPGTQRGLWRLRPDLSFVFFSSHTPCGDASIIPMLEFEEQPCCPVIRSWANNSPVQETENLEDSKDKRNCEDPASPVAKKMRLGTPARSLSNCVAHHGTQESGPVKPDVSSSDLTKEEPDAANGIASGSFRVVDVYRTGAKCVPGETGDLREPGAAYHQVGLLRVKPGRGDRTCSMSCSDKMARWNVLGCQGALLMHFLEKPIYLSAVVIGKCPYSQEAMRRALTGRCEETLVLPRGFGVQELEIQQSGLLFEQSRCAVHRKRGDSPGRLVPCGAAISWSAVPQQPLDVTANGFPQGTTKKEIGSPRARSRISKVELFRSFQKLLSSIADDEQPDSIRVTKKLDTYQEYKDAASAYQEAWGALRRIQPFASWIRNPPDYHQFK</sequence>
<organism>
    <name type="scientific">Mus musculus</name>
    <name type="common">Mouse</name>
    <dbReference type="NCBI Taxonomy" id="10090"/>
    <lineage>
        <taxon>Eukaryota</taxon>
        <taxon>Metazoa</taxon>
        <taxon>Chordata</taxon>
        <taxon>Craniata</taxon>
        <taxon>Vertebrata</taxon>
        <taxon>Euteleostomi</taxon>
        <taxon>Mammalia</taxon>
        <taxon>Eutheria</taxon>
        <taxon>Euarchontoglires</taxon>
        <taxon>Glires</taxon>
        <taxon>Rodentia</taxon>
        <taxon>Myomorpha</taxon>
        <taxon>Muroidea</taxon>
        <taxon>Muridae</taxon>
        <taxon>Murinae</taxon>
        <taxon>Mus</taxon>
        <taxon>Mus</taxon>
    </lineage>
</organism>
<proteinExistence type="evidence at protein level"/>
<name>ADAT1_MOUSE</name>
<protein>
    <recommendedName>
        <fullName>tRNA-specific adenosine deaminase 1</fullName>
        <shortName>mADAT1</shortName>
        <ecNumber>3.5.4.34</ecNumber>
    </recommendedName>
    <alternativeName>
        <fullName>tRNA-specific adenosine-37 deaminase</fullName>
    </alternativeName>
</protein>
<comment type="function">
    <text evidence="4">Specifically deaminates adenosine-37 to inosine in tRNA-Ala.</text>
</comment>
<comment type="catalytic activity">
    <reaction evidence="4">
        <text>adenosine(37) in tRNA(Ala) + H2O + H(+) = inosine(37) in tRNA(Ala) + NH4(+)</text>
        <dbReference type="Rhea" id="RHEA:50968"/>
        <dbReference type="Rhea" id="RHEA-COMP:12855"/>
        <dbReference type="Rhea" id="RHEA-COMP:12856"/>
        <dbReference type="ChEBI" id="CHEBI:15377"/>
        <dbReference type="ChEBI" id="CHEBI:15378"/>
        <dbReference type="ChEBI" id="CHEBI:28938"/>
        <dbReference type="ChEBI" id="CHEBI:74411"/>
        <dbReference type="ChEBI" id="CHEBI:82852"/>
        <dbReference type="EC" id="3.5.4.34"/>
    </reaction>
</comment>
<comment type="cofactor">
    <cofactor evidence="1">
        <name>1D-myo-inositol hexakisphosphate</name>
        <dbReference type="ChEBI" id="CHEBI:58130"/>
    </cofactor>
    <text evidence="1">Binds 1 myo-inositol hexakisphosphate (IP6) per subunit.</text>
</comment>
<comment type="alternative products">
    <event type="alternative splicing"/>
    <isoform>
        <id>Q9JHI2-1</id>
        <name>1</name>
        <sequence type="displayed"/>
    </isoform>
    <isoform>
        <id>Q9JHI2-2</id>
        <name>2</name>
        <sequence type="described" ref="VSP_025581"/>
    </isoform>
    <isoform>
        <id>Q9JHI2-3</id>
        <name>3</name>
        <sequence type="described" ref="VSP_025580 VSP_025581"/>
    </isoform>
</comment>
<comment type="similarity">
    <text evidence="7">Belongs to the ADAT1 family.</text>
</comment>
<keyword id="KW-0025">Alternative splicing</keyword>
<keyword id="KW-0378">Hydrolase</keyword>
<keyword id="KW-0479">Metal-binding</keyword>
<keyword id="KW-0597">Phosphoprotein</keyword>
<keyword id="KW-1185">Reference proteome</keyword>
<keyword id="KW-0819">tRNA processing</keyword>
<keyword id="KW-0862">Zinc</keyword>
<dbReference type="EC" id="3.5.4.34"/>
<dbReference type="EMBL" id="AF192375">
    <property type="protein sequence ID" value="AAF36820.1"/>
    <property type="molecule type" value="mRNA"/>
</dbReference>
<dbReference type="EMBL" id="AF192374">
    <property type="protein sequence ID" value="AAF36821.1"/>
    <property type="molecule type" value="Genomic_DNA"/>
</dbReference>
<dbReference type="EMBL" id="AF192367">
    <property type="protein sequence ID" value="AAF36821.1"/>
    <property type="status" value="JOINED"/>
    <property type="molecule type" value="Genomic_DNA"/>
</dbReference>
<dbReference type="EMBL" id="AF192368">
    <property type="protein sequence ID" value="AAF36821.1"/>
    <property type="status" value="JOINED"/>
    <property type="molecule type" value="Genomic_DNA"/>
</dbReference>
<dbReference type="EMBL" id="AF192369">
    <property type="protein sequence ID" value="AAF36821.1"/>
    <property type="status" value="JOINED"/>
    <property type="molecule type" value="Genomic_DNA"/>
</dbReference>
<dbReference type="EMBL" id="AF192370">
    <property type="protein sequence ID" value="AAF36821.1"/>
    <property type="status" value="JOINED"/>
    <property type="molecule type" value="Genomic_DNA"/>
</dbReference>
<dbReference type="EMBL" id="AF192371">
    <property type="protein sequence ID" value="AAF36821.1"/>
    <property type="status" value="JOINED"/>
    <property type="molecule type" value="Genomic_DNA"/>
</dbReference>
<dbReference type="EMBL" id="AF192372">
    <property type="protein sequence ID" value="AAF36821.1"/>
    <property type="status" value="JOINED"/>
    <property type="molecule type" value="Genomic_DNA"/>
</dbReference>
<dbReference type="EMBL" id="AF192373">
    <property type="protein sequence ID" value="AAF36821.1"/>
    <property type="status" value="JOINED"/>
    <property type="molecule type" value="Genomic_DNA"/>
</dbReference>
<dbReference type="EMBL" id="AK035614">
    <property type="protein sequence ID" value="BAC29125.1"/>
    <property type="molecule type" value="mRNA"/>
</dbReference>
<dbReference type="EMBL" id="AK039699">
    <property type="protein sequence ID" value="BAC30422.1"/>
    <property type="molecule type" value="mRNA"/>
</dbReference>
<dbReference type="EMBL" id="AK082399">
    <property type="protein sequence ID" value="BAC38487.1"/>
    <property type="molecule type" value="mRNA"/>
</dbReference>
<dbReference type="EMBL" id="AK161044">
    <property type="protein sequence ID" value="BAE36167.1"/>
    <property type="molecule type" value="mRNA"/>
</dbReference>
<dbReference type="EMBL" id="BC019976">
    <property type="protein sequence ID" value="AAH19976.1"/>
    <property type="molecule type" value="mRNA"/>
</dbReference>
<dbReference type="CCDS" id="CCDS22684.1">
    <molecule id="Q9JHI2-1"/>
</dbReference>
<dbReference type="CCDS" id="CCDS90464.1">
    <molecule id="Q9JHI2-2"/>
</dbReference>
<dbReference type="RefSeq" id="NP_001344113.1">
    <molecule id="Q9JHI2-3"/>
    <property type="nucleotide sequence ID" value="NM_001357184.1"/>
</dbReference>
<dbReference type="RefSeq" id="NP_001344114.1">
    <molecule id="Q9JHI2-2"/>
    <property type="nucleotide sequence ID" value="NM_001357185.1"/>
</dbReference>
<dbReference type="RefSeq" id="NP_038953.1">
    <molecule id="Q9JHI2-1"/>
    <property type="nucleotide sequence ID" value="NM_013925.5"/>
</dbReference>
<dbReference type="SMR" id="Q9JHI2"/>
<dbReference type="FunCoup" id="Q9JHI2">
    <property type="interactions" value="412"/>
</dbReference>
<dbReference type="STRING" id="10090.ENSMUSP00000034427"/>
<dbReference type="iPTMnet" id="Q9JHI2"/>
<dbReference type="PhosphoSitePlus" id="Q9JHI2"/>
<dbReference type="PaxDb" id="10090-ENSMUSP00000034427"/>
<dbReference type="PeptideAtlas" id="Q9JHI2"/>
<dbReference type="ProteomicsDB" id="296062">
    <molecule id="Q9JHI2-1"/>
</dbReference>
<dbReference type="ProteomicsDB" id="296063">
    <molecule id="Q9JHI2-2"/>
</dbReference>
<dbReference type="ProteomicsDB" id="296064">
    <molecule id="Q9JHI2-3"/>
</dbReference>
<dbReference type="Pumba" id="Q9JHI2"/>
<dbReference type="Antibodypedia" id="16832">
    <property type="antibodies" value="165 antibodies from 22 providers"/>
</dbReference>
<dbReference type="DNASU" id="30947"/>
<dbReference type="Ensembl" id="ENSMUST00000034427.12">
    <molecule id="Q9JHI2-1"/>
    <property type="protein sequence ID" value="ENSMUSP00000034427.6"/>
    <property type="gene ID" value="ENSMUSG00000031949.18"/>
</dbReference>
<dbReference type="Ensembl" id="ENSMUST00000139820.8">
    <molecule id="Q9JHI2-2"/>
    <property type="protein sequence ID" value="ENSMUSP00000117279.2"/>
    <property type="gene ID" value="ENSMUSG00000031949.18"/>
</dbReference>
<dbReference type="GeneID" id="30947"/>
<dbReference type="KEGG" id="mmu:30947"/>
<dbReference type="UCSC" id="uc009nnc.1">
    <molecule id="Q9JHI2-1"/>
    <property type="organism name" value="mouse"/>
</dbReference>
<dbReference type="UCSC" id="uc012gkz.1">
    <molecule id="Q9JHI2-3"/>
    <property type="organism name" value="mouse"/>
</dbReference>
<dbReference type="AGR" id="MGI:1353631"/>
<dbReference type="CTD" id="23536"/>
<dbReference type="MGI" id="MGI:1353631">
    <property type="gene designation" value="Adat1"/>
</dbReference>
<dbReference type="VEuPathDB" id="HostDB:ENSMUSG00000031949"/>
<dbReference type="eggNOG" id="KOG2777">
    <property type="taxonomic scope" value="Eukaryota"/>
</dbReference>
<dbReference type="GeneTree" id="ENSGT00940000157942"/>
<dbReference type="HOGENOM" id="CLU_005382_5_2_1"/>
<dbReference type="InParanoid" id="Q9JHI2"/>
<dbReference type="OMA" id="HPKKITY"/>
<dbReference type="OrthoDB" id="10268011at2759"/>
<dbReference type="PhylomeDB" id="Q9JHI2"/>
<dbReference type="TreeFam" id="TF315806"/>
<dbReference type="BioGRID-ORCS" id="30947">
    <property type="hits" value="0 hits in 76 CRISPR screens"/>
</dbReference>
<dbReference type="ChiTaRS" id="Adat1">
    <property type="organism name" value="mouse"/>
</dbReference>
<dbReference type="PRO" id="PR:Q9JHI2"/>
<dbReference type="Proteomes" id="UP000000589">
    <property type="component" value="Chromosome 8"/>
</dbReference>
<dbReference type="RNAct" id="Q9JHI2">
    <property type="molecule type" value="protein"/>
</dbReference>
<dbReference type="Bgee" id="ENSMUSG00000031949">
    <property type="expression patterns" value="Expressed in floor plate of midbrain and 140 other cell types or tissues"/>
</dbReference>
<dbReference type="ExpressionAtlas" id="Q9JHI2">
    <property type="expression patterns" value="baseline and differential"/>
</dbReference>
<dbReference type="GO" id="GO:0046872">
    <property type="term" value="F:metal ion binding"/>
    <property type="evidence" value="ECO:0007669"/>
    <property type="project" value="UniProtKB-KW"/>
</dbReference>
<dbReference type="GO" id="GO:0003723">
    <property type="term" value="F:RNA binding"/>
    <property type="evidence" value="ECO:0000250"/>
    <property type="project" value="UniProtKB"/>
</dbReference>
<dbReference type="GO" id="GO:0008251">
    <property type="term" value="F:tRNA-specific adenosine deaminase activity"/>
    <property type="evidence" value="ECO:0000250"/>
    <property type="project" value="UniProtKB"/>
</dbReference>
<dbReference type="GO" id="GO:0043829">
    <property type="term" value="F:tRNA-specific adenosine-37 deaminase activity"/>
    <property type="evidence" value="ECO:0007669"/>
    <property type="project" value="UniProtKB-EC"/>
</dbReference>
<dbReference type="GO" id="GO:0008033">
    <property type="term" value="P:tRNA processing"/>
    <property type="evidence" value="ECO:0000250"/>
    <property type="project" value="UniProtKB"/>
</dbReference>
<dbReference type="InterPro" id="IPR002466">
    <property type="entry name" value="A_deamin"/>
</dbReference>
<dbReference type="PANTHER" id="PTHR46516">
    <property type="entry name" value="TRNA-SPECIFIC ADENOSINE DEAMINASE 1"/>
    <property type="match status" value="1"/>
</dbReference>
<dbReference type="PANTHER" id="PTHR46516:SF1">
    <property type="entry name" value="TRNA-SPECIFIC ADENOSINE DEAMINASE 1"/>
    <property type="match status" value="1"/>
</dbReference>
<dbReference type="Pfam" id="PF02137">
    <property type="entry name" value="A_deamin"/>
    <property type="match status" value="1"/>
</dbReference>
<dbReference type="SMART" id="SM00552">
    <property type="entry name" value="ADEAMc"/>
    <property type="match status" value="1"/>
</dbReference>
<dbReference type="PROSITE" id="PS50141">
    <property type="entry name" value="A_DEAMIN_EDITASE"/>
    <property type="match status" value="1"/>
</dbReference>
<evidence type="ECO:0000250" key="1"/>
<evidence type="ECO:0000255" key="2">
    <source>
        <dbReference type="PROSITE-ProRule" id="PRU00240"/>
    </source>
</evidence>
<evidence type="ECO:0000256" key="3">
    <source>
        <dbReference type="SAM" id="MobiDB-lite"/>
    </source>
</evidence>
<evidence type="ECO:0000269" key="4">
    <source>
    </source>
</evidence>
<evidence type="ECO:0000303" key="5">
    <source>
    </source>
</evidence>
<evidence type="ECO:0000303" key="6">
    <source>
    </source>
</evidence>
<evidence type="ECO:0000305" key="7"/>
<evidence type="ECO:0007744" key="8">
    <source>
    </source>
</evidence>
<evidence type="ECO:0007744" key="9">
    <source>
    </source>
</evidence>